<evidence type="ECO:0000255" key="1">
    <source>
        <dbReference type="HAMAP-Rule" id="MF_00158"/>
    </source>
</evidence>
<organism>
    <name type="scientific">Bartonella bacilliformis (strain ATCC 35685 / KC583 / Herrer 020/F12,63)</name>
    <dbReference type="NCBI Taxonomy" id="360095"/>
    <lineage>
        <taxon>Bacteria</taxon>
        <taxon>Pseudomonadati</taxon>
        <taxon>Pseudomonadota</taxon>
        <taxon>Alphaproteobacteria</taxon>
        <taxon>Hyphomicrobiales</taxon>
        <taxon>Bartonellaceae</taxon>
        <taxon>Bartonella</taxon>
    </lineage>
</organism>
<gene>
    <name evidence="1" type="primary">panC</name>
    <name type="ordered locus">BARBAKC583_0476</name>
</gene>
<feature type="chain" id="PRO_0000305402" description="Pantothenate synthetase">
    <location>
        <begin position="1"/>
        <end position="281"/>
    </location>
</feature>
<feature type="active site" description="Proton donor" evidence="1">
    <location>
        <position position="37"/>
    </location>
</feature>
<feature type="binding site" evidence="1">
    <location>
        <begin position="30"/>
        <end position="37"/>
    </location>
    <ligand>
        <name>ATP</name>
        <dbReference type="ChEBI" id="CHEBI:30616"/>
    </ligand>
</feature>
<feature type="binding site" evidence="1">
    <location>
        <position position="61"/>
    </location>
    <ligand>
        <name>(R)-pantoate</name>
        <dbReference type="ChEBI" id="CHEBI:15980"/>
    </ligand>
</feature>
<feature type="binding site" evidence="1">
    <location>
        <position position="61"/>
    </location>
    <ligand>
        <name>beta-alanine</name>
        <dbReference type="ChEBI" id="CHEBI:57966"/>
    </ligand>
</feature>
<feature type="binding site" evidence="1">
    <location>
        <begin position="147"/>
        <end position="150"/>
    </location>
    <ligand>
        <name>ATP</name>
        <dbReference type="ChEBI" id="CHEBI:30616"/>
    </ligand>
</feature>
<feature type="binding site" evidence="1">
    <location>
        <position position="153"/>
    </location>
    <ligand>
        <name>(R)-pantoate</name>
        <dbReference type="ChEBI" id="CHEBI:15980"/>
    </ligand>
</feature>
<feature type="binding site" evidence="1">
    <location>
        <position position="176"/>
    </location>
    <ligand>
        <name>ATP</name>
        <dbReference type="ChEBI" id="CHEBI:30616"/>
    </ligand>
</feature>
<feature type="binding site" evidence="1">
    <location>
        <begin position="184"/>
        <end position="187"/>
    </location>
    <ligand>
        <name>ATP</name>
        <dbReference type="ChEBI" id="CHEBI:30616"/>
    </ligand>
</feature>
<reference key="1">
    <citation type="submission" date="2006-12" db="EMBL/GenBank/DDBJ databases">
        <authorList>
            <person name="Hendrix L."/>
            <person name="Mohamoud Y."/>
            <person name="Radune D."/>
            <person name="Shvartsbeyn A."/>
            <person name="Daugherty S."/>
            <person name="Dodson R."/>
            <person name="Durkin A.S."/>
            <person name="Harkins D."/>
            <person name="Huot H."/>
            <person name="Kothari S.P."/>
            <person name="Madupu R."/>
            <person name="Li J."/>
            <person name="Nelson W.C."/>
            <person name="Shrivastava S."/>
            <person name="Giglio M.G."/>
            <person name="Haft D."/>
            <person name="Selengut J."/>
            <person name="Fraser-Ligget C."/>
            <person name="Seshadri R."/>
        </authorList>
    </citation>
    <scope>NUCLEOTIDE SEQUENCE [LARGE SCALE GENOMIC DNA]</scope>
    <source>
        <strain>ATCC 35685 / KC583 / Herrer 020/F12,63</strain>
    </source>
</reference>
<name>PANC_BARBK</name>
<proteinExistence type="inferred from homology"/>
<protein>
    <recommendedName>
        <fullName evidence="1">Pantothenate synthetase</fullName>
        <shortName evidence="1">PS</shortName>
        <ecNumber evidence="1">6.3.2.1</ecNumber>
    </recommendedName>
    <alternativeName>
        <fullName evidence="1">Pantoate--beta-alanine ligase</fullName>
    </alternativeName>
    <alternativeName>
        <fullName evidence="1">Pantoate-activating enzyme</fullName>
    </alternativeName>
</protein>
<keyword id="KW-0067">ATP-binding</keyword>
<keyword id="KW-0963">Cytoplasm</keyword>
<keyword id="KW-0436">Ligase</keyword>
<keyword id="KW-0547">Nucleotide-binding</keyword>
<keyword id="KW-0566">Pantothenate biosynthesis</keyword>
<dbReference type="EC" id="6.3.2.1" evidence="1"/>
<dbReference type="EMBL" id="CP000524">
    <property type="protein sequence ID" value="ABM45328.1"/>
    <property type="molecule type" value="Genomic_DNA"/>
</dbReference>
<dbReference type="RefSeq" id="WP_005766551.1">
    <property type="nucleotide sequence ID" value="NC_008783.1"/>
</dbReference>
<dbReference type="SMR" id="A1US39"/>
<dbReference type="STRING" id="360095.BARBAKC583_0476"/>
<dbReference type="GeneID" id="4684356"/>
<dbReference type="KEGG" id="bbk:BARBAKC583_0476"/>
<dbReference type="PATRIC" id="fig|360095.6.peg.458"/>
<dbReference type="eggNOG" id="COG0414">
    <property type="taxonomic scope" value="Bacteria"/>
</dbReference>
<dbReference type="HOGENOM" id="CLU_047148_0_0_5"/>
<dbReference type="OrthoDB" id="9773087at2"/>
<dbReference type="UniPathway" id="UPA00028">
    <property type="reaction ID" value="UER00005"/>
</dbReference>
<dbReference type="Proteomes" id="UP000000643">
    <property type="component" value="Chromosome"/>
</dbReference>
<dbReference type="GO" id="GO:0005829">
    <property type="term" value="C:cytosol"/>
    <property type="evidence" value="ECO:0007669"/>
    <property type="project" value="TreeGrafter"/>
</dbReference>
<dbReference type="GO" id="GO:0005524">
    <property type="term" value="F:ATP binding"/>
    <property type="evidence" value="ECO:0007669"/>
    <property type="project" value="UniProtKB-KW"/>
</dbReference>
<dbReference type="GO" id="GO:0004592">
    <property type="term" value="F:pantoate-beta-alanine ligase activity"/>
    <property type="evidence" value="ECO:0007669"/>
    <property type="project" value="UniProtKB-UniRule"/>
</dbReference>
<dbReference type="GO" id="GO:0015940">
    <property type="term" value="P:pantothenate biosynthetic process"/>
    <property type="evidence" value="ECO:0007669"/>
    <property type="project" value="UniProtKB-UniRule"/>
</dbReference>
<dbReference type="CDD" id="cd00560">
    <property type="entry name" value="PanC"/>
    <property type="match status" value="1"/>
</dbReference>
<dbReference type="FunFam" id="3.40.50.620:FF:000013">
    <property type="entry name" value="Pantothenate synthetase"/>
    <property type="match status" value="1"/>
</dbReference>
<dbReference type="Gene3D" id="3.40.50.620">
    <property type="entry name" value="HUPs"/>
    <property type="match status" value="1"/>
</dbReference>
<dbReference type="Gene3D" id="3.30.1300.10">
    <property type="entry name" value="Pantoate-beta-alanine ligase, C-terminal domain"/>
    <property type="match status" value="1"/>
</dbReference>
<dbReference type="HAMAP" id="MF_00158">
    <property type="entry name" value="PanC"/>
    <property type="match status" value="1"/>
</dbReference>
<dbReference type="InterPro" id="IPR004821">
    <property type="entry name" value="Cyt_trans-like"/>
</dbReference>
<dbReference type="InterPro" id="IPR003721">
    <property type="entry name" value="Pantoate_ligase"/>
</dbReference>
<dbReference type="InterPro" id="IPR042176">
    <property type="entry name" value="Pantoate_ligase_C"/>
</dbReference>
<dbReference type="InterPro" id="IPR014729">
    <property type="entry name" value="Rossmann-like_a/b/a_fold"/>
</dbReference>
<dbReference type="NCBIfam" id="TIGR00125">
    <property type="entry name" value="cyt_tran_rel"/>
    <property type="match status" value="1"/>
</dbReference>
<dbReference type="NCBIfam" id="TIGR00018">
    <property type="entry name" value="panC"/>
    <property type="match status" value="1"/>
</dbReference>
<dbReference type="PANTHER" id="PTHR21299">
    <property type="entry name" value="CYTIDYLATE KINASE/PANTOATE-BETA-ALANINE LIGASE"/>
    <property type="match status" value="1"/>
</dbReference>
<dbReference type="PANTHER" id="PTHR21299:SF1">
    <property type="entry name" value="PANTOATE--BETA-ALANINE LIGASE"/>
    <property type="match status" value="1"/>
</dbReference>
<dbReference type="Pfam" id="PF02569">
    <property type="entry name" value="Pantoate_ligase"/>
    <property type="match status" value="1"/>
</dbReference>
<dbReference type="SUPFAM" id="SSF52374">
    <property type="entry name" value="Nucleotidylyl transferase"/>
    <property type="match status" value="1"/>
</dbReference>
<accession>A1US39</accession>
<comment type="function">
    <text evidence="1">Catalyzes the condensation of pantoate with beta-alanine in an ATP-dependent reaction via a pantoyl-adenylate intermediate.</text>
</comment>
<comment type="catalytic activity">
    <reaction evidence="1">
        <text>(R)-pantoate + beta-alanine + ATP = (R)-pantothenate + AMP + diphosphate + H(+)</text>
        <dbReference type="Rhea" id="RHEA:10912"/>
        <dbReference type="ChEBI" id="CHEBI:15378"/>
        <dbReference type="ChEBI" id="CHEBI:15980"/>
        <dbReference type="ChEBI" id="CHEBI:29032"/>
        <dbReference type="ChEBI" id="CHEBI:30616"/>
        <dbReference type="ChEBI" id="CHEBI:33019"/>
        <dbReference type="ChEBI" id="CHEBI:57966"/>
        <dbReference type="ChEBI" id="CHEBI:456215"/>
        <dbReference type="EC" id="6.3.2.1"/>
    </reaction>
</comment>
<comment type="pathway">
    <text evidence="1">Cofactor biosynthesis; (R)-pantothenate biosynthesis; (R)-pantothenate from (R)-pantoate and beta-alanine: step 1/1.</text>
</comment>
<comment type="subunit">
    <text evidence="1">Homodimer.</text>
</comment>
<comment type="subcellular location">
    <subcellularLocation>
        <location evidence="1">Cytoplasm</location>
    </subcellularLocation>
</comment>
<comment type="miscellaneous">
    <text evidence="1">The reaction proceeds by a bi uni uni bi ping pong mechanism.</text>
</comment>
<comment type="similarity">
    <text evidence="1">Belongs to the pantothenate synthetase family.</text>
</comment>
<sequence>MRVLKTIAEVRQHLTEERRLGLSIGFVPTMGALHHGHLALVQKAREMCDRVLVSIFVNPKQFGSHEDFEVYPRDLLSDCTLLNKEAVEYVFAPSVEEMWPLGNDTIVEVEGLSRILMGELRPGHFCGVTSVVAKLFNIVQPDKVFFGEKDFQQLLIIRRMVKDLAFPIEVIGVPILRDSDGVASSSRNQLLTPEDRKAAKIIPESGKAAEKLYRQGERSVDKLCKAVRDILQQELRAIVESVDLRNMETLSAIKGTLDAPAVLLLTVRFGDVRLIDQYILQ</sequence>